<protein>
    <recommendedName>
        <fullName evidence="2">NADH-quinone oxidoreductase subunit B 2</fullName>
        <ecNumber evidence="2">7.1.1.-</ecNumber>
    </recommendedName>
    <alternativeName>
        <fullName evidence="2">NADH dehydrogenase I subunit B 2</fullName>
    </alternativeName>
    <alternativeName>
        <fullName evidence="2">NDH-1 subunit B 2</fullName>
    </alternativeName>
</protein>
<keyword id="KW-0004">4Fe-4S</keyword>
<keyword id="KW-0997">Cell inner membrane</keyword>
<keyword id="KW-1003">Cell membrane</keyword>
<keyword id="KW-0408">Iron</keyword>
<keyword id="KW-0411">Iron-sulfur</keyword>
<keyword id="KW-0472">Membrane</keyword>
<keyword id="KW-0479">Metal-binding</keyword>
<keyword id="KW-0520">NAD</keyword>
<keyword id="KW-0874">Quinone</keyword>
<keyword id="KW-1278">Translocase</keyword>
<keyword id="KW-0813">Transport</keyword>
<keyword id="KW-0830">Ubiquinone</keyword>
<evidence type="ECO:0000250" key="1"/>
<evidence type="ECO:0000255" key="2">
    <source>
        <dbReference type="HAMAP-Rule" id="MF_01356"/>
    </source>
</evidence>
<evidence type="ECO:0000305" key="3"/>
<reference key="1">
    <citation type="journal article" date="2010" name="Genome Biol. Evol.">
        <title>Continuing evolution of Burkholderia mallei through genome reduction and large-scale rearrangements.</title>
        <authorList>
            <person name="Losada L."/>
            <person name="Ronning C.M."/>
            <person name="DeShazer D."/>
            <person name="Woods D."/>
            <person name="Fedorova N."/>
            <person name="Kim H.S."/>
            <person name="Shabalina S.A."/>
            <person name="Pearson T.R."/>
            <person name="Brinkac L."/>
            <person name="Tan P."/>
            <person name="Nandi T."/>
            <person name="Crabtree J."/>
            <person name="Badger J."/>
            <person name="Beckstrom-Sternberg S."/>
            <person name="Saqib M."/>
            <person name="Schutzer S.E."/>
            <person name="Keim P."/>
            <person name="Nierman W.C."/>
        </authorList>
    </citation>
    <scope>NUCLEOTIDE SEQUENCE [LARGE SCALE GENOMIC DNA]</scope>
    <source>
        <strain>NCTC 10229</strain>
    </source>
</reference>
<organism>
    <name type="scientific">Burkholderia mallei (strain NCTC 10229)</name>
    <dbReference type="NCBI Taxonomy" id="412022"/>
    <lineage>
        <taxon>Bacteria</taxon>
        <taxon>Pseudomonadati</taxon>
        <taxon>Pseudomonadota</taxon>
        <taxon>Betaproteobacteria</taxon>
        <taxon>Burkholderiales</taxon>
        <taxon>Burkholderiaceae</taxon>
        <taxon>Burkholderia</taxon>
        <taxon>pseudomallei group</taxon>
    </lineage>
</organism>
<feature type="chain" id="PRO_0000358372" description="NADH-quinone oxidoreductase subunit B 2">
    <location>
        <begin position="1"/>
        <end position="167"/>
    </location>
</feature>
<feature type="binding site" evidence="2">
    <location>
        <position position="39"/>
    </location>
    <ligand>
        <name>[4Fe-4S] cluster</name>
        <dbReference type="ChEBI" id="CHEBI:49883"/>
    </ligand>
</feature>
<feature type="binding site" evidence="2">
    <location>
        <position position="40"/>
    </location>
    <ligand>
        <name>[4Fe-4S] cluster</name>
        <dbReference type="ChEBI" id="CHEBI:49883"/>
    </ligand>
</feature>
<feature type="binding site" evidence="2">
    <location>
        <position position="104"/>
    </location>
    <ligand>
        <name>[4Fe-4S] cluster</name>
        <dbReference type="ChEBI" id="CHEBI:49883"/>
    </ligand>
</feature>
<feature type="binding site" evidence="2">
    <location>
        <position position="134"/>
    </location>
    <ligand>
        <name>[4Fe-4S] cluster</name>
        <dbReference type="ChEBI" id="CHEBI:49883"/>
    </ligand>
</feature>
<accession>A2RYJ4</accession>
<dbReference type="EC" id="7.1.1.-" evidence="2"/>
<dbReference type="EMBL" id="CP000545">
    <property type="protein sequence ID" value="ABM99785.1"/>
    <property type="status" value="ALT_INIT"/>
    <property type="molecule type" value="Genomic_DNA"/>
</dbReference>
<dbReference type="RefSeq" id="WP_004186860.1">
    <property type="nucleotide sequence ID" value="NC_008835.1"/>
</dbReference>
<dbReference type="SMR" id="A2RYJ4"/>
<dbReference type="KEGG" id="bml:BMA10229_0954"/>
<dbReference type="HOGENOM" id="CLU_055737_0_0_4"/>
<dbReference type="Proteomes" id="UP000002283">
    <property type="component" value="Chromosome II"/>
</dbReference>
<dbReference type="GO" id="GO:0005886">
    <property type="term" value="C:plasma membrane"/>
    <property type="evidence" value="ECO:0007669"/>
    <property type="project" value="UniProtKB-SubCell"/>
</dbReference>
<dbReference type="GO" id="GO:0045271">
    <property type="term" value="C:respiratory chain complex I"/>
    <property type="evidence" value="ECO:0007669"/>
    <property type="project" value="TreeGrafter"/>
</dbReference>
<dbReference type="GO" id="GO:0051539">
    <property type="term" value="F:4 iron, 4 sulfur cluster binding"/>
    <property type="evidence" value="ECO:0007669"/>
    <property type="project" value="UniProtKB-KW"/>
</dbReference>
<dbReference type="GO" id="GO:0005506">
    <property type="term" value="F:iron ion binding"/>
    <property type="evidence" value="ECO:0007669"/>
    <property type="project" value="UniProtKB-UniRule"/>
</dbReference>
<dbReference type="GO" id="GO:0008137">
    <property type="term" value="F:NADH dehydrogenase (ubiquinone) activity"/>
    <property type="evidence" value="ECO:0007669"/>
    <property type="project" value="InterPro"/>
</dbReference>
<dbReference type="GO" id="GO:0050136">
    <property type="term" value="F:NADH:ubiquinone reductase (non-electrogenic) activity"/>
    <property type="evidence" value="ECO:0007669"/>
    <property type="project" value="UniProtKB-UniRule"/>
</dbReference>
<dbReference type="GO" id="GO:0048038">
    <property type="term" value="F:quinone binding"/>
    <property type="evidence" value="ECO:0007669"/>
    <property type="project" value="UniProtKB-KW"/>
</dbReference>
<dbReference type="GO" id="GO:0009060">
    <property type="term" value="P:aerobic respiration"/>
    <property type="evidence" value="ECO:0007669"/>
    <property type="project" value="TreeGrafter"/>
</dbReference>
<dbReference type="GO" id="GO:0015990">
    <property type="term" value="P:electron transport coupled proton transport"/>
    <property type="evidence" value="ECO:0007669"/>
    <property type="project" value="TreeGrafter"/>
</dbReference>
<dbReference type="FunFam" id="3.40.50.12280:FF:000001">
    <property type="entry name" value="NADH-quinone oxidoreductase subunit B 2"/>
    <property type="match status" value="1"/>
</dbReference>
<dbReference type="Gene3D" id="3.40.50.12280">
    <property type="match status" value="1"/>
</dbReference>
<dbReference type="HAMAP" id="MF_01356">
    <property type="entry name" value="NDH1_NuoB"/>
    <property type="match status" value="1"/>
</dbReference>
<dbReference type="InterPro" id="IPR006137">
    <property type="entry name" value="NADH_UbQ_OxRdtase-like_20kDa"/>
</dbReference>
<dbReference type="InterPro" id="IPR006138">
    <property type="entry name" value="NADH_UQ_OxRdtase_20Kd_su"/>
</dbReference>
<dbReference type="NCBIfam" id="TIGR01957">
    <property type="entry name" value="nuoB_fam"/>
    <property type="match status" value="1"/>
</dbReference>
<dbReference type="NCBIfam" id="NF005012">
    <property type="entry name" value="PRK06411.1"/>
    <property type="match status" value="1"/>
</dbReference>
<dbReference type="PANTHER" id="PTHR11995">
    <property type="entry name" value="NADH DEHYDROGENASE"/>
    <property type="match status" value="1"/>
</dbReference>
<dbReference type="PANTHER" id="PTHR11995:SF14">
    <property type="entry name" value="NADH DEHYDROGENASE [UBIQUINONE] IRON-SULFUR PROTEIN 7, MITOCHONDRIAL"/>
    <property type="match status" value="1"/>
</dbReference>
<dbReference type="Pfam" id="PF01058">
    <property type="entry name" value="Oxidored_q6"/>
    <property type="match status" value="1"/>
</dbReference>
<dbReference type="SUPFAM" id="SSF56770">
    <property type="entry name" value="HydA/Nqo6-like"/>
    <property type="match status" value="1"/>
</dbReference>
<dbReference type="PROSITE" id="PS01150">
    <property type="entry name" value="COMPLEX1_20K"/>
    <property type="match status" value="1"/>
</dbReference>
<name>NUOB2_BURM9</name>
<proteinExistence type="inferred from homology"/>
<comment type="function">
    <text evidence="1">NDH-1 shuttles electrons from NADH, via FMN and iron-sulfur (Fe-S) centers, to quinones in the respiratory chain. Couples the redox reaction to proton translocation (for every two electrons transferred, four hydrogen ions are translocated across the cytoplasmic membrane), and thus conserves the redox energy in a proton gradient (By similarity).</text>
</comment>
<comment type="catalytic activity">
    <reaction evidence="2">
        <text>a quinone + NADH + 5 H(+)(in) = a quinol + NAD(+) + 4 H(+)(out)</text>
        <dbReference type="Rhea" id="RHEA:57888"/>
        <dbReference type="ChEBI" id="CHEBI:15378"/>
        <dbReference type="ChEBI" id="CHEBI:24646"/>
        <dbReference type="ChEBI" id="CHEBI:57540"/>
        <dbReference type="ChEBI" id="CHEBI:57945"/>
        <dbReference type="ChEBI" id="CHEBI:132124"/>
    </reaction>
</comment>
<comment type="cofactor">
    <cofactor evidence="2">
        <name>[4Fe-4S] cluster</name>
        <dbReference type="ChEBI" id="CHEBI:49883"/>
    </cofactor>
    <text evidence="2">Binds 1 [4Fe-4S] cluster.</text>
</comment>
<comment type="subunit">
    <text evidence="2">NDH-1 is composed of 14 different subunits. Subunits NuoB, C, D, E, F, and G constitute the peripheral sector of the complex.</text>
</comment>
<comment type="subcellular location">
    <subcellularLocation>
        <location evidence="2">Cell inner membrane</location>
        <topology evidence="2">Peripheral membrane protein</topology>
        <orientation evidence="2">Cytoplasmic side</orientation>
    </subcellularLocation>
</comment>
<comment type="similarity">
    <text evidence="2">Belongs to the complex I 20 kDa subunit family.</text>
</comment>
<comment type="sequence caution" evidence="3">
    <conflict type="erroneous initiation">
        <sequence resource="EMBL-CDS" id="ABM99785"/>
    </conflict>
</comment>
<gene>
    <name evidence="2" type="primary">nuoB2</name>
    <name type="ordered locus">BMA10229_0954</name>
</gene>
<sequence length="167" mass="18469">MANHPLTLEKDGFIVTTLDAAMAAAQKNSLWYMTFGLACCAVEMMHAAGARYDMDRFGMIPRASPRQCDLMIVAGTLTNKMAPAMRRVYDQMAEPRYVVSMGSCANGGGYYHYSYSVVRGCDRIVPVDVYVPGCPPTAEALVYGLMQLQRKVAERSTHSRPKLFARP</sequence>